<organism>
    <name type="scientific">Macaca fascicularis</name>
    <name type="common">Crab-eating macaque</name>
    <name type="synonym">Cynomolgus monkey</name>
    <dbReference type="NCBI Taxonomy" id="9541"/>
    <lineage>
        <taxon>Eukaryota</taxon>
        <taxon>Metazoa</taxon>
        <taxon>Chordata</taxon>
        <taxon>Craniata</taxon>
        <taxon>Vertebrata</taxon>
        <taxon>Euteleostomi</taxon>
        <taxon>Mammalia</taxon>
        <taxon>Eutheria</taxon>
        <taxon>Euarchontoglires</taxon>
        <taxon>Primates</taxon>
        <taxon>Haplorrhini</taxon>
        <taxon>Catarrhini</taxon>
        <taxon>Cercopithecidae</taxon>
        <taxon>Cercopithecinae</taxon>
        <taxon>Macaca</taxon>
    </lineage>
</organism>
<sequence>MRLFLSLPVLVVVLSMVLEGPAPAQGAPDVSSALDKLKEFGNTLEDKAWEVINRIKQSEFPAKTRDWFSETFRKVKEKLKINS</sequence>
<reference key="1">
    <citation type="submission" date="2006-08" db="EMBL/GenBank/DDBJ databases">
        <title>Analysis of gene expression in cynomolgus monkey tissues by macaque cDNA microarray.</title>
        <authorList>
            <person name="Kobayashi M."/>
            <person name="Uno Y."/>
            <person name="Suzuki Y."/>
            <person name="Osada N."/>
            <person name="Kusuda J."/>
            <person name="Sugano S."/>
            <person name="Inoue I."/>
            <person name="Hashimoto K."/>
        </authorList>
    </citation>
    <scope>NUCLEOTIDE SEQUENCE [MRNA]</scope>
    <source>
        <tissue>Liver</tissue>
    </source>
</reference>
<reference key="2">
    <citation type="journal article" date="2011" name="Nat. Biotechnol.">
        <title>Genome sequencing and comparison of two nonhuman primate animal models, the cynomolgus and Chinese rhesus macaques.</title>
        <authorList>
            <person name="Yan G."/>
            <person name="Zhang G."/>
            <person name="Fang X."/>
            <person name="Zhang Y."/>
            <person name="Li C."/>
            <person name="Ling F."/>
            <person name="Cooper D.N."/>
            <person name="Li Q."/>
            <person name="Li Y."/>
            <person name="van Gool A.J."/>
            <person name="Du H."/>
            <person name="Chen J."/>
            <person name="Chen R."/>
            <person name="Zhang P."/>
            <person name="Huang Z."/>
            <person name="Thompson J.R."/>
            <person name="Meng Y."/>
            <person name="Bai Y."/>
            <person name="Wang J."/>
            <person name="Zhuo M."/>
            <person name="Wang T."/>
            <person name="Huang Y."/>
            <person name="Wei L."/>
            <person name="Li J."/>
            <person name="Wang Z."/>
            <person name="Hu H."/>
            <person name="Yang P."/>
            <person name="Le L."/>
            <person name="Stenson P.D."/>
            <person name="Li B."/>
            <person name="Liu X."/>
            <person name="Ball E.V."/>
            <person name="An N."/>
            <person name="Huang Q."/>
            <person name="Zhang Y."/>
            <person name="Fan W."/>
            <person name="Zhang X."/>
            <person name="Li Y."/>
            <person name="Wang W."/>
            <person name="Katze M.G."/>
            <person name="Su B."/>
            <person name="Nielsen R."/>
            <person name="Yang H."/>
            <person name="Wang J."/>
            <person name="Wang X."/>
            <person name="Wang J."/>
        </authorList>
    </citation>
    <scope>NUCLEOTIDE SEQUENCE [LARGE SCALE GENOMIC DNA]</scope>
</reference>
<reference key="3">
    <citation type="journal article" date="1987" name="Biochemistry">
        <title>Homologues of the human C and A apolipoproteins in the Macaca fascicularis (cynomolgus) monkey.</title>
        <authorList>
            <person name="Herbert P.N."/>
            <person name="Bausserman L.L."/>
            <person name="Lynch K.M."/>
            <person name="Saritelli A.L."/>
            <person name="Kantor M.A."/>
            <person name="Nicolosi R.J."/>
            <person name="Shulman R.S."/>
        </authorList>
    </citation>
    <scope>PROTEIN SEQUENCE OF 27-48</scope>
</reference>
<reference key="4">
    <citation type="journal article" date="2013" name="Front. Biol.">
        <title>Proteogenomic Review of the Changes in Primate apoC-I during Evolution.</title>
        <authorList>
            <person name="Puppione D."/>
            <person name="Whitelegge J.P."/>
        </authorList>
    </citation>
    <scope>REVIEW</scope>
</reference>
<reference key="5">
    <citation type="journal article" date="2014" name="Comp. Biochem. Physiol.">
        <title>Higher primates, but not New World monkeys, have a duplicate set of enhancers flanking their apoC-I genes.</title>
        <authorList>
            <person name="Puppione D.L."/>
        </authorList>
    </citation>
    <scope>GENE DUPLICATION</scope>
</reference>
<name>APO1B_MACFA</name>
<accession>P18657</accession>
<accession>A2V9Y4</accession>
<accession>G7PXV4</accession>
<dbReference type="EMBL" id="AK240617">
    <property type="protein sequence ID" value="BAF47371.1"/>
    <property type="molecule type" value="mRNA"/>
</dbReference>
<dbReference type="EMBL" id="AK240623">
    <property type="protein sequence ID" value="BAF47377.1"/>
    <property type="molecule type" value="mRNA"/>
</dbReference>
<dbReference type="EMBL" id="CM001294">
    <property type="protein sequence ID" value="EHH59678.1"/>
    <property type="status" value="ALT_SEQ"/>
    <property type="molecule type" value="Genomic_DNA"/>
</dbReference>
<dbReference type="PIR" id="C26627">
    <property type="entry name" value="C26627"/>
</dbReference>
<dbReference type="SMR" id="P18657"/>
<dbReference type="STRING" id="9541.ENSMFAP00000009855"/>
<dbReference type="Ensembl" id="ENSMFAT00000037098.2">
    <property type="protein sequence ID" value="ENSMFAP00000009847.1"/>
    <property type="gene ID" value="ENSMFAG00000038912.2"/>
</dbReference>
<dbReference type="Ensembl" id="ENSMFAT00000037155.2">
    <property type="protein sequence ID" value="ENSMFAP00000009855.2"/>
    <property type="gene ID" value="ENSMFAG00000038912.2"/>
</dbReference>
<dbReference type="GeneID" id="102139092"/>
<dbReference type="KEGG" id="mcf:102139092"/>
<dbReference type="CTD" id="341"/>
<dbReference type="VEuPathDB" id="HostDB:ENSMFAG00000038912"/>
<dbReference type="eggNOG" id="ENOG502SEU4">
    <property type="taxonomic scope" value="Eukaryota"/>
</dbReference>
<dbReference type="GeneTree" id="ENSGT00390000011584"/>
<dbReference type="OMA" id="GTSTRNW"/>
<dbReference type="OrthoDB" id="14429at314294"/>
<dbReference type="Proteomes" id="UP000009130">
    <property type="component" value="Chromosome 19"/>
</dbReference>
<dbReference type="Proteomes" id="UP000233100">
    <property type="component" value="Chromosome 19"/>
</dbReference>
<dbReference type="Bgee" id="ENSMFAG00000038912">
    <property type="expression patterns" value="Expressed in liver and 12 other cell types or tissues"/>
</dbReference>
<dbReference type="GO" id="GO:0005783">
    <property type="term" value="C:endoplasmic reticulum"/>
    <property type="evidence" value="ECO:0007669"/>
    <property type="project" value="Ensembl"/>
</dbReference>
<dbReference type="GO" id="GO:0034364">
    <property type="term" value="C:high-density lipoprotein particle"/>
    <property type="evidence" value="ECO:0007669"/>
    <property type="project" value="Ensembl"/>
</dbReference>
<dbReference type="GO" id="GO:0034361">
    <property type="term" value="C:very-low-density lipoprotein particle"/>
    <property type="evidence" value="ECO:0007669"/>
    <property type="project" value="Ensembl"/>
</dbReference>
<dbReference type="GO" id="GO:0005504">
    <property type="term" value="F:fatty acid binding"/>
    <property type="evidence" value="ECO:0007669"/>
    <property type="project" value="Ensembl"/>
</dbReference>
<dbReference type="GO" id="GO:0004859">
    <property type="term" value="F:phospholipase inhibitor activity"/>
    <property type="evidence" value="ECO:0007669"/>
    <property type="project" value="Ensembl"/>
</dbReference>
<dbReference type="GO" id="GO:0033344">
    <property type="term" value="P:cholesterol efflux"/>
    <property type="evidence" value="ECO:0007669"/>
    <property type="project" value="Ensembl"/>
</dbReference>
<dbReference type="GO" id="GO:0008203">
    <property type="term" value="P:cholesterol metabolic process"/>
    <property type="evidence" value="ECO:0007669"/>
    <property type="project" value="Ensembl"/>
</dbReference>
<dbReference type="GO" id="GO:0034382">
    <property type="term" value="P:chylomicron remnant clearance"/>
    <property type="evidence" value="ECO:0007669"/>
    <property type="project" value="Ensembl"/>
</dbReference>
<dbReference type="GO" id="GO:0042157">
    <property type="term" value="P:lipoprotein metabolic process"/>
    <property type="evidence" value="ECO:0007669"/>
    <property type="project" value="InterPro"/>
</dbReference>
<dbReference type="GO" id="GO:0032375">
    <property type="term" value="P:negative regulation of cholesterol transport"/>
    <property type="evidence" value="ECO:0007669"/>
    <property type="project" value="Ensembl"/>
</dbReference>
<dbReference type="GO" id="GO:0045717">
    <property type="term" value="P:negative regulation of fatty acid biosynthetic process"/>
    <property type="evidence" value="ECO:0007669"/>
    <property type="project" value="Ensembl"/>
</dbReference>
<dbReference type="GO" id="GO:0010900">
    <property type="term" value="P:negative regulation of phosphatidylcholine catabolic process"/>
    <property type="evidence" value="ECO:0007669"/>
    <property type="project" value="Ensembl"/>
</dbReference>
<dbReference type="GO" id="GO:0048261">
    <property type="term" value="P:negative regulation of receptor-mediated endocytosis"/>
    <property type="evidence" value="ECO:0007669"/>
    <property type="project" value="Ensembl"/>
</dbReference>
<dbReference type="GO" id="GO:0010897">
    <property type="term" value="P:negative regulation of triglyceride catabolic process"/>
    <property type="evidence" value="ECO:0007669"/>
    <property type="project" value="Ensembl"/>
</dbReference>
<dbReference type="GO" id="GO:0010916">
    <property type="term" value="P:negative regulation of very-low-density lipoprotein particle clearance"/>
    <property type="evidence" value="ECO:0007669"/>
    <property type="project" value="Ensembl"/>
</dbReference>
<dbReference type="GO" id="GO:0033700">
    <property type="term" value="P:phospholipid efflux"/>
    <property type="evidence" value="ECO:0007669"/>
    <property type="project" value="Ensembl"/>
</dbReference>
<dbReference type="GO" id="GO:0034369">
    <property type="term" value="P:plasma lipoprotein particle remodeling"/>
    <property type="evidence" value="ECO:0007669"/>
    <property type="project" value="Ensembl"/>
</dbReference>
<dbReference type="GO" id="GO:0070328">
    <property type="term" value="P:triglyceride homeostasis"/>
    <property type="evidence" value="ECO:0007669"/>
    <property type="project" value="Ensembl"/>
</dbReference>
<dbReference type="GO" id="GO:0006641">
    <property type="term" value="P:triglyceride metabolic process"/>
    <property type="evidence" value="ECO:0007669"/>
    <property type="project" value="Ensembl"/>
</dbReference>
<dbReference type="GO" id="GO:0034447">
    <property type="term" value="P:very-low-density lipoprotein particle clearance"/>
    <property type="evidence" value="ECO:0007669"/>
    <property type="project" value="Ensembl"/>
</dbReference>
<dbReference type="Gene3D" id="4.10.260.30">
    <property type="entry name" value="Apolipoprotein C-I"/>
    <property type="match status" value="1"/>
</dbReference>
<dbReference type="InterPro" id="IPR043081">
    <property type="entry name" value="ApoC-1_sf"/>
</dbReference>
<dbReference type="InterPro" id="IPR006781">
    <property type="entry name" value="ApoC-I"/>
</dbReference>
<dbReference type="PANTHER" id="PTHR16565">
    <property type="entry name" value="APOLIPOPROTEIN C-I"/>
    <property type="match status" value="1"/>
</dbReference>
<dbReference type="PANTHER" id="PTHR16565:SF2">
    <property type="entry name" value="APOLIPOPROTEIN C-I"/>
    <property type="match status" value="1"/>
</dbReference>
<dbReference type="Pfam" id="PF04691">
    <property type="entry name" value="ApoC-I"/>
    <property type="match status" value="1"/>
</dbReference>
<feature type="signal peptide" evidence="5">
    <location>
        <begin position="1"/>
        <end position="26"/>
    </location>
</feature>
<feature type="chain" id="PRO_0000190977" description="Apolipoprotein C-I, basic form">
    <location>
        <begin position="27"/>
        <end position="83"/>
    </location>
</feature>
<feature type="chain" id="PRO_0000436802" description="Cholesteryl ester transfer inhibitor protein" evidence="3">
    <location>
        <begin position="27"/>
        <end position="64"/>
    </location>
</feature>
<feature type="chain" id="PRO_0000436803" description="Truncated apolipoprotein C-I, basic form" evidence="4">
    <location>
        <begin position="29"/>
        <end position="83"/>
    </location>
</feature>
<proteinExistence type="evidence at protein level"/>
<comment type="function">
    <text evidence="1 2">Inhibitor of lipoprotein binding to the low density lipoprotein (LDL) receptor, LDL receptor-related protein, and very low density lipoprotein (VLDL) receptor. Associates with high density lipoproteins (HDL) and the triacylglycerol-rich lipoproteins in the plasma and makes up about 10% of the protein of the VLDL and 2% of that of HDL. Appears to interfere directly with fatty acid uptake and is also the major plasma inhibitor of cholesteryl ester transfer protein (CETP). Binds free fatty acids and reduces their intracellular esterification. Modulates the interaction of APOE with beta-migrating VLDL and inhibits binding of beta-VLDL to the LDL receptor-related protein.</text>
</comment>
<comment type="subcellular location">
    <subcellularLocation>
        <location evidence="1">Secreted</location>
    </subcellularLocation>
</comment>
<comment type="miscellaneous">
    <text evidence="6">Apolipoprotein C-I is present in acidic (APOC1A) and basic (APOC1B) forms in P.paniscus, P.abelii and P.troglodytes and perhaps also in baboons and macaques. The two genes for ApoC-I arose through a duplication process that occurred after the divergence of New World monkeys from the human lineage. In human, the acidic form has become a pseudogene sometime between the divergence of bonobos and chimpanzees from the human lineage and the appearance of the Denisovans. Pseudogenization resulted when the codon for the penultimate amino acid in the signal sequence was changed to a stop codon.</text>
</comment>
<comment type="similarity">
    <text evidence="7">Belongs to the apolipoprotein C1 family.</text>
</comment>
<comment type="sequence caution" evidence="7">
    <conflict type="erroneous gene model prediction">
        <sequence resource="EMBL-CDS" id="EHH59678"/>
    </conflict>
</comment>
<protein>
    <recommendedName>
        <fullName>Apolipoprotein C-I, basic form</fullName>
        <shortName>Apo-CIB</shortName>
        <shortName>ApoC-IB</shortName>
    </recommendedName>
    <alternativeName>
        <fullName>Apolipoprotein C1B</fullName>
    </alternativeName>
    <component>
        <recommendedName>
            <fullName>Cholesteryl ester transfer inhibitor protein</fullName>
            <shortName>CETIP</shortName>
        </recommendedName>
    </component>
    <component>
        <recommendedName>
            <fullName>Truncated apolipoprotein C-I, basic form</fullName>
            <shortName>Apo-CIB'</shortName>
            <shortName>ApoC-IB'</shortName>
        </recommendedName>
    </component>
</protein>
<evidence type="ECO:0000250" key="1">
    <source>
        <dbReference type="UniProtKB" id="P02654"/>
    </source>
</evidence>
<evidence type="ECO:0000250" key="2">
    <source>
        <dbReference type="UniProtKB" id="P33047"/>
    </source>
</evidence>
<evidence type="ECO:0000250" key="3">
    <source>
        <dbReference type="UniProtKB" id="P34929"/>
    </source>
</evidence>
<evidence type="ECO:0000250" key="4">
    <source>
        <dbReference type="UniProtKB" id="P86336"/>
    </source>
</evidence>
<evidence type="ECO:0000269" key="5">
    <source>
    </source>
</evidence>
<evidence type="ECO:0000303" key="6">
    <source>
    </source>
</evidence>
<evidence type="ECO:0000305" key="7"/>
<keyword id="KW-0903">Direct protein sequencing</keyword>
<keyword id="KW-0445">Lipid transport</keyword>
<keyword id="KW-1185">Reference proteome</keyword>
<keyword id="KW-0964">Secreted</keyword>
<keyword id="KW-0732">Signal</keyword>
<keyword id="KW-0813">Transport</keyword>
<gene>
    <name type="primary">APOC1B</name>
</gene>